<organism>
    <name type="scientific">Trypanosoma brucei brucei</name>
    <dbReference type="NCBI Taxonomy" id="5702"/>
    <lineage>
        <taxon>Eukaryota</taxon>
        <taxon>Discoba</taxon>
        <taxon>Euglenozoa</taxon>
        <taxon>Kinetoplastea</taxon>
        <taxon>Metakinetoplastina</taxon>
        <taxon>Trypanosomatida</taxon>
        <taxon>Trypanosomatidae</taxon>
        <taxon>Trypanosoma</taxon>
    </lineage>
</organism>
<proteinExistence type="evidence at transcript level"/>
<protein>
    <recommendedName>
        <fullName>Putative serine/threonine-protein kinase A</fullName>
        <ecNumber>2.7.11.1</ecNumber>
    </recommendedName>
</protein>
<sequence length="431" mass="47916">MAEPFSTILGTDGSGGRCKYLNKGIVGLGSYGEAYVAESVEDGSLCVAKVMDLSKMSQRDKRYAQSEIKCLANCNHPNIIRYIEDHEENDRLLIVMEFADSGNLDEQIKLRGSGDARYFQEHEALFLFLQLCLALDYIHSHKMLHRDIKSANVLLTSTGLVKLGDFGFSHQYEDTVSGVVASTFCGTPYYLAPELWNNKRYNKKADVWSLGVLLYEIMGMKKPFSASNLKGLMSKVLAGTYAPLPDSFSSEFKRVVDGILVADPNDRPSVREIFQIPYINKGLKLFVQALKKNERISDSVKEVLVTQVSEILSSEVSPDAHRFLVSQINYDVTHRGHVNKLGGGNGKSWKPRFLQIVRGQLILTDDEEGNNPKGLNLEQVQGACPVPHSTAKRDFVFALNTVGGKGMWFQAVSHGDMEMWVHAIQRGIGVA</sequence>
<comment type="catalytic activity">
    <reaction>
        <text>L-seryl-[protein] + ATP = O-phospho-L-seryl-[protein] + ADP + H(+)</text>
        <dbReference type="Rhea" id="RHEA:17989"/>
        <dbReference type="Rhea" id="RHEA-COMP:9863"/>
        <dbReference type="Rhea" id="RHEA-COMP:11604"/>
        <dbReference type="ChEBI" id="CHEBI:15378"/>
        <dbReference type="ChEBI" id="CHEBI:29999"/>
        <dbReference type="ChEBI" id="CHEBI:30616"/>
        <dbReference type="ChEBI" id="CHEBI:83421"/>
        <dbReference type="ChEBI" id="CHEBI:456216"/>
        <dbReference type="EC" id="2.7.11.1"/>
    </reaction>
</comment>
<comment type="catalytic activity">
    <reaction>
        <text>L-threonyl-[protein] + ATP = O-phospho-L-threonyl-[protein] + ADP + H(+)</text>
        <dbReference type="Rhea" id="RHEA:46608"/>
        <dbReference type="Rhea" id="RHEA-COMP:11060"/>
        <dbReference type="Rhea" id="RHEA-COMP:11605"/>
        <dbReference type="ChEBI" id="CHEBI:15378"/>
        <dbReference type="ChEBI" id="CHEBI:30013"/>
        <dbReference type="ChEBI" id="CHEBI:30616"/>
        <dbReference type="ChEBI" id="CHEBI:61977"/>
        <dbReference type="ChEBI" id="CHEBI:456216"/>
        <dbReference type="EC" id="2.7.11.1"/>
    </reaction>
</comment>
<comment type="similarity">
    <text evidence="2">Belongs to the protein kinase superfamily. Ser/Thr protein kinase family.</text>
</comment>
<keyword id="KW-0067">ATP-binding</keyword>
<keyword id="KW-0418">Kinase</keyword>
<keyword id="KW-0547">Nucleotide-binding</keyword>
<keyword id="KW-0723">Serine/threonine-protein kinase</keyword>
<keyword id="KW-0808">Transferase</keyword>
<gene>
    <name type="primary">NRKA</name>
</gene>
<feature type="chain" id="PRO_0000086447" description="Putative serine/threonine-protein kinase A">
    <location>
        <begin position="1"/>
        <end position="431"/>
    </location>
</feature>
<feature type="domain" description="Protein kinase" evidence="2">
    <location>
        <begin position="20"/>
        <end position="279"/>
    </location>
</feature>
<feature type="domain" description="PH" evidence="1">
    <location>
        <begin position="331"/>
        <end position="429"/>
    </location>
</feature>
<feature type="active site" description="Proton acceptor" evidence="2 3">
    <location>
        <position position="147"/>
    </location>
</feature>
<feature type="binding site" evidence="2">
    <location>
        <begin position="26"/>
        <end position="34"/>
    </location>
    <ligand>
        <name>ATP</name>
        <dbReference type="ChEBI" id="CHEBI:30616"/>
    </ligand>
</feature>
<feature type="binding site" evidence="2">
    <location>
        <position position="49"/>
    </location>
    <ligand>
        <name>ATP</name>
        <dbReference type="ChEBI" id="CHEBI:30616"/>
    </ligand>
</feature>
<feature type="sequence variant" description="In strain: TREU66.">
    <original>A</original>
    <variation>P</variation>
    <location>
        <position position="192"/>
    </location>
</feature>
<feature type="sequence variant" description="In strain: TREU66.">
    <original>K</original>
    <variation>L</variation>
    <location>
        <position position="199"/>
    </location>
</feature>
<evidence type="ECO:0000255" key="1">
    <source>
        <dbReference type="PROSITE-ProRule" id="PRU00145"/>
    </source>
</evidence>
<evidence type="ECO:0000255" key="2">
    <source>
        <dbReference type="PROSITE-ProRule" id="PRU00159"/>
    </source>
</evidence>
<evidence type="ECO:0000255" key="3">
    <source>
        <dbReference type="PROSITE-ProRule" id="PRU10027"/>
    </source>
</evidence>
<dbReference type="EC" id="2.7.11.1"/>
<dbReference type="EMBL" id="L03778">
    <property type="protein sequence ID" value="AAB59252.1"/>
    <property type="molecule type" value="mRNA"/>
</dbReference>
<dbReference type="PIR" id="T11854">
    <property type="entry name" value="T11854"/>
</dbReference>
<dbReference type="SMR" id="Q08942"/>
<dbReference type="GO" id="GO:0005524">
    <property type="term" value="F:ATP binding"/>
    <property type="evidence" value="ECO:0007669"/>
    <property type="project" value="UniProtKB-KW"/>
</dbReference>
<dbReference type="GO" id="GO:0106310">
    <property type="term" value="F:protein serine kinase activity"/>
    <property type="evidence" value="ECO:0007669"/>
    <property type="project" value="RHEA"/>
</dbReference>
<dbReference type="GO" id="GO:0004674">
    <property type="term" value="F:protein serine/threonine kinase activity"/>
    <property type="evidence" value="ECO:0007669"/>
    <property type="project" value="UniProtKB-KW"/>
</dbReference>
<dbReference type="CDD" id="cd00821">
    <property type="entry name" value="PH"/>
    <property type="match status" value="1"/>
</dbReference>
<dbReference type="CDD" id="cd08215">
    <property type="entry name" value="STKc_Nek"/>
    <property type="match status" value="1"/>
</dbReference>
<dbReference type="FunFam" id="1.10.510.10:FF:000535">
    <property type="entry name" value="Serine/threonine-protein kinase a"/>
    <property type="match status" value="1"/>
</dbReference>
<dbReference type="FunFam" id="2.30.29.30:FF:000746">
    <property type="entry name" value="Serine/threonine-protein kinase NrkA"/>
    <property type="match status" value="1"/>
</dbReference>
<dbReference type="Gene3D" id="2.30.29.30">
    <property type="entry name" value="Pleckstrin-homology domain (PH domain)/Phosphotyrosine-binding domain (PTB)"/>
    <property type="match status" value="1"/>
</dbReference>
<dbReference type="Gene3D" id="1.10.510.10">
    <property type="entry name" value="Transferase(Phosphotransferase) domain 1"/>
    <property type="match status" value="1"/>
</dbReference>
<dbReference type="InterPro" id="IPR011009">
    <property type="entry name" value="Kinase-like_dom_sf"/>
</dbReference>
<dbReference type="InterPro" id="IPR051131">
    <property type="entry name" value="NEK_Ser/Thr_kinase_NIMA"/>
</dbReference>
<dbReference type="InterPro" id="IPR011993">
    <property type="entry name" value="PH-like_dom_sf"/>
</dbReference>
<dbReference type="InterPro" id="IPR001849">
    <property type="entry name" value="PH_domain"/>
</dbReference>
<dbReference type="InterPro" id="IPR000719">
    <property type="entry name" value="Prot_kinase_dom"/>
</dbReference>
<dbReference type="InterPro" id="IPR017441">
    <property type="entry name" value="Protein_kinase_ATP_BS"/>
</dbReference>
<dbReference type="InterPro" id="IPR008271">
    <property type="entry name" value="Ser/Thr_kinase_AS"/>
</dbReference>
<dbReference type="PANTHER" id="PTHR44899">
    <property type="entry name" value="CAMK FAMILY PROTEIN KINASE"/>
    <property type="match status" value="1"/>
</dbReference>
<dbReference type="PANTHER" id="PTHR44899:SF3">
    <property type="entry name" value="SERINE_THREONINE-PROTEIN KINASE NEK1"/>
    <property type="match status" value="1"/>
</dbReference>
<dbReference type="Pfam" id="PF00169">
    <property type="entry name" value="PH"/>
    <property type="match status" value="1"/>
</dbReference>
<dbReference type="Pfam" id="PF00069">
    <property type="entry name" value="Pkinase"/>
    <property type="match status" value="1"/>
</dbReference>
<dbReference type="SMART" id="SM00233">
    <property type="entry name" value="PH"/>
    <property type="match status" value="1"/>
</dbReference>
<dbReference type="SMART" id="SM00220">
    <property type="entry name" value="S_TKc"/>
    <property type="match status" value="1"/>
</dbReference>
<dbReference type="SUPFAM" id="SSF50729">
    <property type="entry name" value="PH domain-like"/>
    <property type="match status" value="1"/>
</dbReference>
<dbReference type="SUPFAM" id="SSF56112">
    <property type="entry name" value="Protein kinase-like (PK-like)"/>
    <property type="match status" value="1"/>
</dbReference>
<dbReference type="PROSITE" id="PS50003">
    <property type="entry name" value="PH_DOMAIN"/>
    <property type="match status" value="1"/>
</dbReference>
<dbReference type="PROSITE" id="PS00107">
    <property type="entry name" value="PROTEIN_KINASE_ATP"/>
    <property type="match status" value="1"/>
</dbReference>
<dbReference type="PROSITE" id="PS50011">
    <property type="entry name" value="PROTEIN_KINASE_DOM"/>
    <property type="match status" value="1"/>
</dbReference>
<dbReference type="PROSITE" id="PS00108">
    <property type="entry name" value="PROTEIN_KINASE_ST"/>
    <property type="match status" value="1"/>
</dbReference>
<accession>Q08942</accession>
<name>NRKA_TRYBB</name>
<reference key="1">
    <citation type="journal article" date="1993" name="Mol. Biochem. Parasitol.">
        <title>A Trypanosoma brucei gene family encoding protein kinases with catalytic domains structurally related to Nek1 and NIMA.</title>
        <authorList>
            <person name="Gale M.J. Jr."/>
            <person name="Parsons M."/>
        </authorList>
    </citation>
    <scope>NUCLEOTIDE SEQUENCE [MRNA]</scope>
    <source>
        <strain>ISTar1</strain>
    </source>
</reference>